<comment type="function">
    <text evidence="1">Binds directly to 23S ribosomal RNA and is necessary for the in vitro assembly process of the 50S ribosomal subunit. It is not involved in the protein synthesizing functions of that subunit.</text>
</comment>
<comment type="similarity">
    <text evidence="1">Belongs to the bacterial ribosomal protein bL20 family.</text>
</comment>
<protein>
    <recommendedName>
        <fullName evidence="1">Large ribosomal subunit protein bL20</fullName>
    </recommendedName>
    <alternativeName>
        <fullName evidence="2">50S ribosomal protein L20</fullName>
    </alternativeName>
</protein>
<gene>
    <name evidence="1" type="primary">rplT</name>
    <name type="ordered locus">XCV2792</name>
</gene>
<accession>Q3BRU0</accession>
<reference key="1">
    <citation type="journal article" date="2005" name="J. Bacteriol.">
        <title>Insights into genome plasticity and pathogenicity of the plant pathogenic Bacterium Xanthomonas campestris pv. vesicatoria revealed by the complete genome sequence.</title>
        <authorList>
            <person name="Thieme F."/>
            <person name="Koebnik R."/>
            <person name="Bekel T."/>
            <person name="Berger C."/>
            <person name="Boch J."/>
            <person name="Buettner D."/>
            <person name="Caldana C."/>
            <person name="Gaigalat L."/>
            <person name="Goesmann A."/>
            <person name="Kay S."/>
            <person name="Kirchner O."/>
            <person name="Lanz C."/>
            <person name="Linke B."/>
            <person name="McHardy A.C."/>
            <person name="Meyer F."/>
            <person name="Mittenhuber G."/>
            <person name="Nies D.H."/>
            <person name="Niesbach-Kloesgen U."/>
            <person name="Patschkowski T."/>
            <person name="Rueckert C."/>
            <person name="Rupp O."/>
            <person name="Schneiker S."/>
            <person name="Schuster S.C."/>
            <person name="Vorhoelter F.J."/>
            <person name="Weber E."/>
            <person name="Puehler A."/>
            <person name="Bonas U."/>
            <person name="Bartels D."/>
            <person name="Kaiser O."/>
        </authorList>
    </citation>
    <scope>NUCLEOTIDE SEQUENCE [LARGE SCALE GENOMIC DNA]</scope>
    <source>
        <strain>85-10</strain>
    </source>
</reference>
<dbReference type="EMBL" id="AM039952">
    <property type="protein sequence ID" value="CAJ24471.1"/>
    <property type="molecule type" value="Genomic_DNA"/>
</dbReference>
<dbReference type="RefSeq" id="WP_003484828.1">
    <property type="nucleotide sequence ID" value="NZ_CP017190.1"/>
</dbReference>
<dbReference type="SMR" id="Q3BRU0"/>
<dbReference type="STRING" id="456327.BJD11_08940"/>
<dbReference type="GeneID" id="97510906"/>
<dbReference type="KEGG" id="xcv:XCV2792"/>
<dbReference type="eggNOG" id="COG0292">
    <property type="taxonomic scope" value="Bacteria"/>
</dbReference>
<dbReference type="HOGENOM" id="CLU_123265_0_1_6"/>
<dbReference type="Proteomes" id="UP000007069">
    <property type="component" value="Chromosome"/>
</dbReference>
<dbReference type="GO" id="GO:1990904">
    <property type="term" value="C:ribonucleoprotein complex"/>
    <property type="evidence" value="ECO:0007669"/>
    <property type="project" value="UniProtKB-KW"/>
</dbReference>
<dbReference type="GO" id="GO:0005840">
    <property type="term" value="C:ribosome"/>
    <property type="evidence" value="ECO:0007669"/>
    <property type="project" value="UniProtKB-KW"/>
</dbReference>
<dbReference type="GO" id="GO:0019843">
    <property type="term" value="F:rRNA binding"/>
    <property type="evidence" value="ECO:0007669"/>
    <property type="project" value="UniProtKB-UniRule"/>
</dbReference>
<dbReference type="GO" id="GO:0003735">
    <property type="term" value="F:structural constituent of ribosome"/>
    <property type="evidence" value="ECO:0007669"/>
    <property type="project" value="InterPro"/>
</dbReference>
<dbReference type="GO" id="GO:0000027">
    <property type="term" value="P:ribosomal large subunit assembly"/>
    <property type="evidence" value="ECO:0007669"/>
    <property type="project" value="UniProtKB-UniRule"/>
</dbReference>
<dbReference type="GO" id="GO:0006412">
    <property type="term" value="P:translation"/>
    <property type="evidence" value="ECO:0007669"/>
    <property type="project" value="InterPro"/>
</dbReference>
<dbReference type="CDD" id="cd07026">
    <property type="entry name" value="Ribosomal_L20"/>
    <property type="match status" value="1"/>
</dbReference>
<dbReference type="FunFam" id="1.10.1900.20:FF:000001">
    <property type="entry name" value="50S ribosomal protein L20"/>
    <property type="match status" value="1"/>
</dbReference>
<dbReference type="Gene3D" id="6.10.160.10">
    <property type="match status" value="1"/>
</dbReference>
<dbReference type="Gene3D" id="1.10.1900.20">
    <property type="entry name" value="Ribosomal protein L20"/>
    <property type="match status" value="1"/>
</dbReference>
<dbReference type="HAMAP" id="MF_00382">
    <property type="entry name" value="Ribosomal_bL20"/>
    <property type="match status" value="1"/>
</dbReference>
<dbReference type="InterPro" id="IPR005813">
    <property type="entry name" value="Ribosomal_bL20"/>
</dbReference>
<dbReference type="InterPro" id="IPR049946">
    <property type="entry name" value="RIBOSOMAL_L20_CS"/>
</dbReference>
<dbReference type="InterPro" id="IPR035566">
    <property type="entry name" value="Ribosomal_protein_bL20_C"/>
</dbReference>
<dbReference type="NCBIfam" id="TIGR01032">
    <property type="entry name" value="rplT_bact"/>
    <property type="match status" value="1"/>
</dbReference>
<dbReference type="PANTHER" id="PTHR10986">
    <property type="entry name" value="39S RIBOSOMAL PROTEIN L20"/>
    <property type="match status" value="1"/>
</dbReference>
<dbReference type="Pfam" id="PF00453">
    <property type="entry name" value="Ribosomal_L20"/>
    <property type="match status" value="1"/>
</dbReference>
<dbReference type="PRINTS" id="PR00062">
    <property type="entry name" value="RIBOSOMALL20"/>
</dbReference>
<dbReference type="SUPFAM" id="SSF74731">
    <property type="entry name" value="Ribosomal protein L20"/>
    <property type="match status" value="1"/>
</dbReference>
<dbReference type="PROSITE" id="PS00937">
    <property type="entry name" value="RIBOSOMAL_L20"/>
    <property type="match status" value="1"/>
</dbReference>
<name>RL20_XANE5</name>
<sequence>MARVKRGVQARRRHKKILTLAKGYYNARRKVFRVAKQAVIKAQQYAYIGRKQKKRNFRSLWITRINAAARINGLSYSRFMNGLLKAGITLDRKVLADIAVHDAAGFAALAEKAKGALAA</sequence>
<feature type="chain" id="PRO_0000243759" description="Large ribosomal subunit protein bL20">
    <location>
        <begin position="1"/>
        <end position="119"/>
    </location>
</feature>
<evidence type="ECO:0000255" key="1">
    <source>
        <dbReference type="HAMAP-Rule" id="MF_00382"/>
    </source>
</evidence>
<evidence type="ECO:0000305" key="2"/>
<organism>
    <name type="scientific">Xanthomonas euvesicatoria pv. vesicatoria (strain 85-10)</name>
    <name type="common">Xanthomonas campestris pv. vesicatoria</name>
    <dbReference type="NCBI Taxonomy" id="316273"/>
    <lineage>
        <taxon>Bacteria</taxon>
        <taxon>Pseudomonadati</taxon>
        <taxon>Pseudomonadota</taxon>
        <taxon>Gammaproteobacteria</taxon>
        <taxon>Lysobacterales</taxon>
        <taxon>Lysobacteraceae</taxon>
        <taxon>Xanthomonas</taxon>
    </lineage>
</organism>
<keyword id="KW-0687">Ribonucleoprotein</keyword>
<keyword id="KW-0689">Ribosomal protein</keyword>
<keyword id="KW-0694">RNA-binding</keyword>
<keyword id="KW-0699">rRNA-binding</keyword>
<proteinExistence type="inferred from homology"/>